<reference key="1">
    <citation type="journal article" date="2017" name="BMC Genomics">
        <title>Chromosome level assembly and secondary metabolite potential of the parasitic fungus Cordyceps militaris.</title>
        <authorList>
            <person name="Kramer G.J."/>
            <person name="Nodwell J.R."/>
        </authorList>
    </citation>
    <scope>NUCLEOTIDE SEQUENCE [LARGE SCALE GENOMIC DNA]</scope>
    <source>
        <strain>ATCC 34164</strain>
    </source>
</reference>
<reference key="2">
    <citation type="journal article" date="2021" name="Int. J. Mol. Sci.">
        <title>Cysteine-Rich Hydrophobin Gene Family: Genome Wide Analysis, Phylogeny and Transcript Profiling in Cordyceps militaris.</title>
        <authorList>
            <person name="Li X."/>
            <person name="Wang F."/>
            <person name="Xu Y."/>
            <person name="Liu G."/>
            <person name="Dong C."/>
        </authorList>
    </citation>
    <scope>FUNCTION</scope>
    <scope>INDUCTION</scope>
</reference>
<name>HYD2_CORMI</name>
<evidence type="ECO:0000250" key="1">
    <source>
        <dbReference type="UniProtKB" id="P16933"/>
    </source>
</evidence>
<evidence type="ECO:0000250" key="2">
    <source>
        <dbReference type="UniProtKB" id="P52754"/>
    </source>
</evidence>
<evidence type="ECO:0000255" key="3"/>
<evidence type="ECO:0000269" key="4">
    <source>
    </source>
</evidence>
<evidence type="ECO:0000303" key="5">
    <source>
    </source>
</evidence>
<evidence type="ECO:0000305" key="6"/>
<evidence type="ECO:0000305" key="7">
    <source>
    </source>
</evidence>
<accession>A0A2H4SHM4</accession>
<keyword id="KW-0134">Cell wall</keyword>
<keyword id="KW-0183">Conidiation</keyword>
<keyword id="KW-1015">Disulfide bond</keyword>
<keyword id="KW-0964">Secreted</keyword>
<keyword id="KW-0732">Signal</keyword>
<keyword id="KW-0749">Sporulation</keyword>
<gene>
    <name evidence="5" type="primary">HYD2</name>
    <name type="ORF">A9K55_008053</name>
</gene>
<protein>
    <recommendedName>
        <fullName evidence="5">Class II hydrophobin 2</fullName>
    </recommendedName>
</protein>
<organism>
    <name type="scientific">Cordyceps militaris</name>
    <name type="common">Caterpillar fungus</name>
    <name type="synonym">Clavaria militaris</name>
    <dbReference type="NCBI Taxonomy" id="73501"/>
    <lineage>
        <taxon>Eukaryota</taxon>
        <taxon>Fungi</taxon>
        <taxon>Dikarya</taxon>
        <taxon>Ascomycota</taxon>
        <taxon>Pezizomycotina</taxon>
        <taxon>Sordariomycetes</taxon>
        <taxon>Hypocreomycetidae</taxon>
        <taxon>Hypocreales</taxon>
        <taxon>Cordycipitaceae</taxon>
        <taxon>Cordyceps</taxon>
    </lineage>
</organism>
<proteinExistence type="evidence at transcript level"/>
<dbReference type="EMBL" id="CP023324">
    <property type="protein sequence ID" value="ATY62608.1"/>
    <property type="molecule type" value="Genomic_DNA"/>
</dbReference>
<dbReference type="VEuPathDB" id="FungiDB:A9K55_008053"/>
<dbReference type="VEuPathDB" id="FungiDB:CCM_06854"/>
<dbReference type="OrthoDB" id="8956at474943"/>
<dbReference type="Proteomes" id="UP000323067">
    <property type="component" value="Chromosome vii"/>
</dbReference>
<dbReference type="GO" id="GO:0005576">
    <property type="term" value="C:extracellular region"/>
    <property type="evidence" value="ECO:0007669"/>
    <property type="project" value="UniProtKB-KW"/>
</dbReference>
<dbReference type="CDD" id="cd23508">
    <property type="entry name" value="hydrophobin_II"/>
    <property type="match status" value="1"/>
</dbReference>
<dbReference type="Gene3D" id="3.20.120.10">
    <property type="entry name" value="Hydrophobin"/>
    <property type="match status" value="1"/>
</dbReference>
<dbReference type="InterPro" id="IPR010636">
    <property type="entry name" value="Cerato-ulmin_hydrophobin"/>
</dbReference>
<dbReference type="InterPro" id="IPR036686">
    <property type="entry name" value="Hydrophobin_sf"/>
</dbReference>
<dbReference type="PANTHER" id="PTHR42341">
    <property type="entry name" value="HYDROPHOBIN"/>
    <property type="match status" value="1"/>
</dbReference>
<dbReference type="PANTHER" id="PTHR42341:SF1">
    <property type="entry name" value="HYDROPHOBIN"/>
    <property type="match status" value="1"/>
</dbReference>
<dbReference type="Pfam" id="PF06766">
    <property type="entry name" value="Hydrophobin_2"/>
    <property type="match status" value="1"/>
</dbReference>
<dbReference type="SUPFAM" id="SSF101751">
    <property type="entry name" value="Hydrophobin II, HfbII"/>
    <property type="match status" value="1"/>
</dbReference>
<comment type="function">
    <text evidence="4 6">Aerial growth, conidiation, and dispersal of filamentous fungi in the environment rely upon a capability of their secreting small amphipathic proteins called hydrophobins (HPBs) with low sequence identity. Class I can self-assemble into an outermost layer of rodlet bundles on aerial cell surfaces, conferring cellular hydrophobicity that supports fungal growth, development and dispersal; whereas Class II form highly ordered films at water-air interfaces through intermolecular interactions but contribute nothing to the rodlet structure (Probable). HYD2 is a class II hydrophobin that contributes to the fruiting body development (PubMed:33440688).</text>
</comment>
<comment type="subunit">
    <text evidence="2">Homotetramer (By similarity). Further self-assembles to form highly ordered films at water-air interfaces through intermolecular interactions (By similarity).</text>
</comment>
<comment type="subcellular location">
    <subcellularLocation>
        <location evidence="7">Secreted</location>
        <location evidence="7">Cell wall</location>
    </subcellularLocation>
    <subcellularLocation>
        <location evidence="7">Secreted</location>
    </subcellularLocation>
</comment>
<comment type="induction">
    <text evidence="4">Shows the highest expression in the down of developed fruiting body (DFU) and low expression in the other stages of fruiting body development.</text>
</comment>
<comment type="similarity">
    <text evidence="6">Belongs to the cerato-ulmin hydrophobin family.</text>
</comment>
<sequence>MKFFVVAALFAGALAAPTELEARTYPVVLCPEGLYANPVCADVDVLGILCLNAVSPSEAPRDANHFREICAKIGKQARCAVLPVLNQAVLCNKPVGITN</sequence>
<feature type="signal peptide" evidence="3">
    <location>
        <begin position="1"/>
        <end position="15"/>
    </location>
</feature>
<feature type="chain" id="PRO_5014155083" description="Class II hydrophobin 2">
    <location>
        <begin position="16"/>
        <end position="99"/>
    </location>
</feature>
<feature type="disulfide bond" evidence="1">
    <location>
        <begin position="30"/>
        <end position="79"/>
    </location>
</feature>
<feature type="disulfide bond" evidence="1">
    <location>
        <begin position="40"/>
        <end position="70"/>
    </location>
</feature>